<feature type="chain" id="PRO_0000376134" description="NADH-quinone oxidoreductase subunit B">
    <location>
        <begin position="1"/>
        <end position="172"/>
    </location>
</feature>
<feature type="binding site" evidence="1">
    <location>
        <position position="46"/>
    </location>
    <ligand>
        <name>[4Fe-4S] cluster</name>
        <dbReference type="ChEBI" id="CHEBI:49883"/>
    </ligand>
</feature>
<feature type="binding site" evidence="1">
    <location>
        <position position="47"/>
    </location>
    <ligand>
        <name>[4Fe-4S] cluster</name>
        <dbReference type="ChEBI" id="CHEBI:49883"/>
    </ligand>
</feature>
<feature type="binding site" evidence="1">
    <location>
        <position position="111"/>
    </location>
    <ligand>
        <name>[4Fe-4S] cluster</name>
        <dbReference type="ChEBI" id="CHEBI:49883"/>
    </ligand>
</feature>
<feature type="binding site" evidence="1">
    <location>
        <position position="141"/>
    </location>
    <ligand>
        <name>[4Fe-4S] cluster</name>
        <dbReference type="ChEBI" id="CHEBI:49883"/>
    </ligand>
</feature>
<reference key="1">
    <citation type="journal article" date="2009" name="J. Bacteriol.">
        <title>Complete genome sequence of the extremophilic Bacillus cereus strain Q1 with industrial applications.</title>
        <authorList>
            <person name="Xiong Z."/>
            <person name="Jiang Y."/>
            <person name="Qi D."/>
            <person name="Lu H."/>
            <person name="Yang F."/>
            <person name="Yang J."/>
            <person name="Chen L."/>
            <person name="Sun L."/>
            <person name="Xu X."/>
            <person name="Xue Y."/>
            <person name="Zhu Y."/>
            <person name="Jin Q."/>
        </authorList>
    </citation>
    <scope>NUCLEOTIDE SEQUENCE [LARGE SCALE GENOMIC DNA]</scope>
    <source>
        <strain>Q1</strain>
    </source>
</reference>
<evidence type="ECO:0000255" key="1">
    <source>
        <dbReference type="HAMAP-Rule" id="MF_01356"/>
    </source>
</evidence>
<name>NUOB_BACCQ</name>
<protein>
    <recommendedName>
        <fullName evidence="1">NADH-quinone oxidoreductase subunit B</fullName>
        <ecNumber evidence="1">7.1.1.-</ecNumber>
    </recommendedName>
    <alternativeName>
        <fullName evidence="1">NADH dehydrogenase I subunit B</fullName>
    </alternativeName>
    <alternativeName>
        <fullName evidence="1">NDH-1 subunit B</fullName>
    </alternativeName>
</protein>
<organism>
    <name type="scientific">Bacillus cereus (strain Q1)</name>
    <dbReference type="NCBI Taxonomy" id="361100"/>
    <lineage>
        <taxon>Bacteria</taxon>
        <taxon>Bacillati</taxon>
        <taxon>Bacillota</taxon>
        <taxon>Bacilli</taxon>
        <taxon>Bacillales</taxon>
        <taxon>Bacillaceae</taxon>
        <taxon>Bacillus</taxon>
        <taxon>Bacillus cereus group</taxon>
    </lineage>
</organism>
<dbReference type="EC" id="7.1.1.-" evidence="1"/>
<dbReference type="EMBL" id="CP000227">
    <property type="protein sequence ID" value="ACM15539.1"/>
    <property type="molecule type" value="Genomic_DNA"/>
</dbReference>
<dbReference type="SMR" id="B9IRT1"/>
<dbReference type="KEGG" id="bcq:BCQ_5139"/>
<dbReference type="HOGENOM" id="CLU_055737_7_3_9"/>
<dbReference type="Proteomes" id="UP000000441">
    <property type="component" value="Chromosome"/>
</dbReference>
<dbReference type="GO" id="GO:0005886">
    <property type="term" value="C:plasma membrane"/>
    <property type="evidence" value="ECO:0007669"/>
    <property type="project" value="UniProtKB-SubCell"/>
</dbReference>
<dbReference type="GO" id="GO:0045271">
    <property type="term" value="C:respiratory chain complex I"/>
    <property type="evidence" value="ECO:0007669"/>
    <property type="project" value="TreeGrafter"/>
</dbReference>
<dbReference type="GO" id="GO:0051539">
    <property type="term" value="F:4 iron, 4 sulfur cluster binding"/>
    <property type="evidence" value="ECO:0007669"/>
    <property type="project" value="UniProtKB-KW"/>
</dbReference>
<dbReference type="GO" id="GO:0005506">
    <property type="term" value="F:iron ion binding"/>
    <property type="evidence" value="ECO:0007669"/>
    <property type="project" value="UniProtKB-UniRule"/>
</dbReference>
<dbReference type="GO" id="GO:0008137">
    <property type="term" value="F:NADH dehydrogenase (ubiquinone) activity"/>
    <property type="evidence" value="ECO:0007669"/>
    <property type="project" value="InterPro"/>
</dbReference>
<dbReference type="GO" id="GO:0050136">
    <property type="term" value="F:NADH:ubiquinone reductase (non-electrogenic) activity"/>
    <property type="evidence" value="ECO:0007669"/>
    <property type="project" value="UniProtKB-UniRule"/>
</dbReference>
<dbReference type="GO" id="GO:0048038">
    <property type="term" value="F:quinone binding"/>
    <property type="evidence" value="ECO:0007669"/>
    <property type="project" value="UniProtKB-KW"/>
</dbReference>
<dbReference type="GO" id="GO:0009060">
    <property type="term" value="P:aerobic respiration"/>
    <property type="evidence" value="ECO:0007669"/>
    <property type="project" value="TreeGrafter"/>
</dbReference>
<dbReference type="GO" id="GO:0015990">
    <property type="term" value="P:electron transport coupled proton transport"/>
    <property type="evidence" value="ECO:0007669"/>
    <property type="project" value="TreeGrafter"/>
</dbReference>
<dbReference type="FunFam" id="3.40.50.12280:FF:000002">
    <property type="entry name" value="NADH-quinone oxidoreductase subunit B"/>
    <property type="match status" value="1"/>
</dbReference>
<dbReference type="Gene3D" id="3.40.50.12280">
    <property type="match status" value="1"/>
</dbReference>
<dbReference type="HAMAP" id="MF_01356">
    <property type="entry name" value="NDH1_NuoB"/>
    <property type="match status" value="1"/>
</dbReference>
<dbReference type="InterPro" id="IPR006137">
    <property type="entry name" value="NADH_UbQ_OxRdtase-like_20kDa"/>
</dbReference>
<dbReference type="InterPro" id="IPR006138">
    <property type="entry name" value="NADH_UQ_OxRdtase_20Kd_su"/>
</dbReference>
<dbReference type="NCBIfam" id="TIGR01957">
    <property type="entry name" value="nuoB_fam"/>
    <property type="match status" value="1"/>
</dbReference>
<dbReference type="NCBIfam" id="NF005012">
    <property type="entry name" value="PRK06411.1"/>
    <property type="match status" value="1"/>
</dbReference>
<dbReference type="PANTHER" id="PTHR11995">
    <property type="entry name" value="NADH DEHYDROGENASE"/>
    <property type="match status" value="1"/>
</dbReference>
<dbReference type="PANTHER" id="PTHR11995:SF14">
    <property type="entry name" value="NADH DEHYDROGENASE [UBIQUINONE] IRON-SULFUR PROTEIN 7, MITOCHONDRIAL"/>
    <property type="match status" value="1"/>
</dbReference>
<dbReference type="Pfam" id="PF01058">
    <property type="entry name" value="Oxidored_q6"/>
    <property type="match status" value="1"/>
</dbReference>
<dbReference type="SUPFAM" id="SSF56770">
    <property type="entry name" value="HydA/Nqo6-like"/>
    <property type="match status" value="1"/>
</dbReference>
<gene>
    <name evidence="1" type="primary">nuoB</name>
    <name type="ordered locus">BCQ_5139</name>
</gene>
<keyword id="KW-0004">4Fe-4S</keyword>
<keyword id="KW-1003">Cell membrane</keyword>
<keyword id="KW-0408">Iron</keyword>
<keyword id="KW-0411">Iron-sulfur</keyword>
<keyword id="KW-0472">Membrane</keyword>
<keyword id="KW-0479">Metal-binding</keyword>
<keyword id="KW-0520">NAD</keyword>
<keyword id="KW-0874">Quinone</keyword>
<keyword id="KW-1278">Translocase</keyword>
<keyword id="KW-0813">Transport</keyword>
<accession>B9IRT1</accession>
<proteinExistence type="inferred from homology"/>
<comment type="function">
    <text evidence="1">NDH-1 shuttles electrons from NADH, via FMN and iron-sulfur (Fe-S) centers, to quinones in the respiratory chain. The immediate electron acceptor for the enzyme in this species is believed to be a menaquinone. Couples the redox reaction to proton translocation (for every two electrons transferred, four hydrogen ions are translocated across the cytoplasmic membrane), and thus conserves the redox energy in a proton gradient.</text>
</comment>
<comment type="catalytic activity">
    <reaction evidence="1">
        <text>a quinone + NADH + 5 H(+)(in) = a quinol + NAD(+) + 4 H(+)(out)</text>
        <dbReference type="Rhea" id="RHEA:57888"/>
        <dbReference type="ChEBI" id="CHEBI:15378"/>
        <dbReference type="ChEBI" id="CHEBI:24646"/>
        <dbReference type="ChEBI" id="CHEBI:57540"/>
        <dbReference type="ChEBI" id="CHEBI:57945"/>
        <dbReference type="ChEBI" id="CHEBI:132124"/>
    </reaction>
</comment>
<comment type="cofactor">
    <cofactor evidence="1">
        <name>[4Fe-4S] cluster</name>
        <dbReference type="ChEBI" id="CHEBI:49883"/>
    </cofactor>
    <text evidence="1">Binds 1 [4Fe-4S] cluster.</text>
</comment>
<comment type="subunit">
    <text evidence="1">NDH-1 is composed of 14 different subunits. Subunits NuoB, C, D, E, F, and G constitute the peripheral sector of the complex.</text>
</comment>
<comment type="subcellular location">
    <subcellularLocation>
        <location evidence="1">Cell membrane</location>
        <topology evidence="1">Peripheral membrane protein</topology>
        <orientation evidence="1">Cytoplasmic side</orientation>
    </subcellularLocation>
</comment>
<comment type="similarity">
    <text evidence="1">Belongs to the complex I 20 kDa subunit family.</text>
</comment>
<sequence length="172" mass="19226">MVINFEELHPNERAELERNIFFSTLEQLKGWARSNSLWPMTFGLACCAIEMMGVGSSHYDLDRFGSFFRTSPRQSDVMIVSGTVTKKMAPIVRRLYDQMPEPKWVIAMGSCATAGGPYVNSYAVVKGVDQIVPVDVYIPGCPPNPAALIYGINKLKEKIRYEAKTGKQVTNK</sequence>